<gene>
    <name evidence="1" type="primary">proB</name>
    <name type="ordered locus">CHY_0380</name>
</gene>
<evidence type="ECO:0000255" key="1">
    <source>
        <dbReference type="HAMAP-Rule" id="MF_00456"/>
    </source>
</evidence>
<protein>
    <recommendedName>
        <fullName evidence="1">Glutamate 5-kinase</fullName>
        <ecNumber evidence="1">2.7.2.11</ecNumber>
    </recommendedName>
    <alternativeName>
        <fullName evidence="1">Gamma-glutamyl kinase</fullName>
        <shortName evidence="1">GK</shortName>
    </alternativeName>
</protein>
<proteinExistence type="inferred from homology"/>
<reference key="1">
    <citation type="journal article" date="2005" name="PLoS Genet.">
        <title>Life in hot carbon monoxide: the complete genome sequence of Carboxydothermus hydrogenoformans Z-2901.</title>
        <authorList>
            <person name="Wu M."/>
            <person name="Ren Q."/>
            <person name="Durkin A.S."/>
            <person name="Daugherty S.C."/>
            <person name="Brinkac L.M."/>
            <person name="Dodson R.J."/>
            <person name="Madupu R."/>
            <person name="Sullivan S.A."/>
            <person name="Kolonay J.F."/>
            <person name="Nelson W.C."/>
            <person name="Tallon L.J."/>
            <person name="Jones K.M."/>
            <person name="Ulrich L.E."/>
            <person name="Gonzalez J.M."/>
            <person name="Zhulin I.B."/>
            <person name="Robb F.T."/>
            <person name="Eisen J.A."/>
        </authorList>
    </citation>
    <scope>NUCLEOTIDE SEQUENCE [LARGE SCALE GENOMIC DNA]</scope>
    <source>
        <strain>ATCC BAA-161 / DSM 6008 / Z-2901</strain>
    </source>
</reference>
<accession>Q3AF41</accession>
<feature type="chain" id="PRO_0000230040" description="Glutamate 5-kinase">
    <location>
        <begin position="1"/>
        <end position="372"/>
    </location>
</feature>
<feature type="domain" description="PUA" evidence="1">
    <location>
        <begin position="279"/>
        <end position="357"/>
    </location>
</feature>
<feature type="binding site" evidence="1">
    <location>
        <position position="14"/>
    </location>
    <ligand>
        <name>ATP</name>
        <dbReference type="ChEBI" id="CHEBI:30616"/>
    </ligand>
</feature>
<feature type="binding site" evidence="1">
    <location>
        <position position="55"/>
    </location>
    <ligand>
        <name>substrate</name>
    </ligand>
</feature>
<feature type="binding site" evidence="1">
    <location>
        <position position="142"/>
    </location>
    <ligand>
        <name>substrate</name>
    </ligand>
</feature>
<feature type="binding site" evidence="1">
    <location>
        <position position="154"/>
    </location>
    <ligand>
        <name>substrate</name>
    </ligand>
</feature>
<feature type="binding site" evidence="1">
    <location>
        <begin position="174"/>
        <end position="175"/>
    </location>
    <ligand>
        <name>ATP</name>
        <dbReference type="ChEBI" id="CHEBI:30616"/>
    </ligand>
</feature>
<feature type="binding site" evidence="1">
    <location>
        <begin position="216"/>
        <end position="222"/>
    </location>
    <ligand>
        <name>ATP</name>
        <dbReference type="ChEBI" id="CHEBI:30616"/>
    </ligand>
</feature>
<organism>
    <name type="scientific">Carboxydothermus hydrogenoformans (strain ATCC BAA-161 / DSM 6008 / Z-2901)</name>
    <dbReference type="NCBI Taxonomy" id="246194"/>
    <lineage>
        <taxon>Bacteria</taxon>
        <taxon>Bacillati</taxon>
        <taxon>Bacillota</taxon>
        <taxon>Clostridia</taxon>
        <taxon>Thermoanaerobacterales</taxon>
        <taxon>Thermoanaerobacteraceae</taxon>
        <taxon>Carboxydothermus</taxon>
    </lineage>
</organism>
<comment type="function">
    <text evidence="1">Catalyzes the transfer of a phosphate group to glutamate to form L-glutamate 5-phosphate.</text>
</comment>
<comment type="catalytic activity">
    <reaction evidence="1">
        <text>L-glutamate + ATP = L-glutamyl 5-phosphate + ADP</text>
        <dbReference type="Rhea" id="RHEA:14877"/>
        <dbReference type="ChEBI" id="CHEBI:29985"/>
        <dbReference type="ChEBI" id="CHEBI:30616"/>
        <dbReference type="ChEBI" id="CHEBI:58274"/>
        <dbReference type="ChEBI" id="CHEBI:456216"/>
        <dbReference type="EC" id="2.7.2.11"/>
    </reaction>
</comment>
<comment type="pathway">
    <text evidence="1">Amino-acid biosynthesis; L-proline biosynthesis; L-glutamate 5-semialdehyde from L-glutamate: step 1/2.</text>
</comment>
<comment type="subcellular location">
    <subcellularLocation>
        <location evidence="1">Cytoplasm</location>
    </subcellularLocation>
</comment>
<comment type="similarity">
    <text evidence="1">Belongs to the glutamate 5-kinase family.</text>
</comment>
<name>PROB_CARHZ</name>
<keyword id="KW-0028">Amino-acid biosynthesis</keyword>
<keyword id="KW-0067">ATP-binding</keyword>
<keyword id="KW-0963">Cytoplasm</keyword>
<keyword id="KW-0418">Kinase</keyword>
<keyword id="KW-0547">Nucleotide-binding</keyword>
<keyword id="KW-0641">Proline biosynthesis</keyword>
<keyword id="KW-1185">Reference proteome</keyword>
<keyword id="KW-0808">Transferase</keyword>
<dbReference type="EC" id="2.7.2.11" evidence="1"/>
<dbReference type="EMBL" id="CP000141">
    <property type="protein sequence ID" value="ABB14910.1"/>
    <property type="molecule type" value="Genomic_DNA"/>
</dbReference>
<dbReference type="RefSeq" id="WP_011343319.1">
    <property type="nucleotide sequence ID" value="NC_007503.1"/>
</dbReference>
<dbReference type="SMR" id="Q3AF41"/>
<dbReference type="FunCoup" id="Q3AF41">
    <property type="interactions" value="270"/>
</dbReference>
<dbReference type="STRING" id="246194.CHY_0380"/>
<dbReference type="KEGG" id="chy:CHY_0380"/>
<dbReference type="eggNOG" id="COG0263">
    <property type="taxonomic scope" value="Bacteria"/>
</dbReference>
<dbReference type="HOGENOM" id="CLU_025400_2_0_9"/>
<dbReference type="InParanoid" id="Q3AF41"/>
<dbReference type="OrthoDB" id="9804434at2"/>
<dbReference type="UniPathway" id="UPA00098">
    <property type="reaction ID" value="UER00359"/>
</dbReference>
<dbReference type="Proteomes" id="UP000002706">
    <property type="component" value="Chromosome"/>
</dbReference>
<dbReference type="GO" id="GO:0005829">
    <property type="term" value="C:cytosol"/>
    <property type="evidence" value="ECO:0007669"/>
    <property type="project" value="TreeGrafter"/>
</dbReference>
<dbReference type="GO" id="GO:0005524">
    <property type="term" value="F:ATP binding"/>
    <property type="evidence" value="ECO:0007669"/>
    <property type="project" value="UniProtKB-KW"/>
</dbReference>
<dbReference type="GO" id="GO:0004349">
    <property type="term" value="F:glutamate 5-kinase activity"/>
    <property type="evidence" value="ECO:0007669"/>
    <property type="project" value="UniProtKB-UniRule"/>
</dbReference>
<dbReference type="GO" id="GO:0003723">
    <property type="term" value="F:RNA binding"/>
    <property type="evidence" value="ECO:0007669"/>
    <property type="project" value="InterPro"/>
</dbReference>
<dbReference type="GO" id="GO:0055129">
    <property type="term" value="P:L-proline biosynthetic process"/>
    <property type="evidence" value="ECO:0007669"/>
    <property type="project" value="UniProtKB-UniRule"/>
</dbReference>
<dbReference type="CDD" id="cd04242">
    <property type="entry name" value="AAK_G5K_ProB"/>
    <property type="match status" value="1"/>
</dbReference>
<dbReference type="CDD" id="cd21157">
    <property type="entry name" value="PUA_G5K"/>
    <property type="match status" value="1"/>
</dbReference>
<dbReference type="FunFam" id="2.30.130.10:FF:000007">
    <property type="entry name" value="Glutamate 5-kinase"/>
    <property type="match status" value="1"/>
</dbReference>
<dbReference type="FunFam" id="3.40.1160.10:FF:000018">
    <property type="entry name" value="Glutamate 5-kinase"/>
    <property type="match status" value="1"/>
</dbReference>
<dbReference type="Gene3D" id="3.40.1160.10">
    <property type="entry name" value="Acetylglutamate kinase-like"/>
    <property type="match status" value="1"/>
</dbReference>
<dbReference type="Gene3D" id="2.30.130.10">
    <property type="entry name" value="PUA domain"/>
    <property type="match status" value="1"/>
</dbReference>
<dbReference type="HAMAP" id="MF_00456">
    <property type="entry name" value="ProB"/>
    <property type="match status" value="1"/>
</dbReference>
<dbReference type="InterPro" id="IPR036393">
    <property type="entry name" value="AceGlu_kinase-like_sf"/>
</dbReference>
<dbReference type="InterPro" id="IPR001048">
    <property type="entry name" value="Asp/Glu/Uridylate_kinase"/>
</dbReference>
<dbReference type="InterPro" id="IPR041739">
    <property type="entry name" value="G5K_ProB"/>
</dbReference>
<dbReference type="InterPro" id="IPR001057">
    <property type="entry name" value="Glu/AcGlu_kinase"/>
</dbReference>
<dbReference type="InterPro" id="IPR011529">
    <property type="entry name" value="Glu_5kinase"/>
</dbReference>
<dbReference type="InterPro" id="IPR005715">
    <property type="entry name" value="Glu_5kinase/COase_Synthase"/>
</dbReference>
<dbReference type="InterPro" id="IPR019797">
    <property type="entry name" value="Glutamate_5-kinase_CS"/>
</dbReference>
<dbReference type="InterPro" id="IPR002478">
    <property type="entry name" value="PUA"/>
</dbReference>
<dbReference type="InterPro" id="IPR015947">
    <property type="entry name" value="PUA-like_sf"/>
</dbReference>
<dbReference type="InterPro" id="IPR036974">
    <property type="entry name" value="PUA_sf"/>
</dbReference>
<dbReference type="NCBIfam" id="TIGR01027">
    <property type="entry name" value="proB"/>
    <property type="match status" value="1"/>
</dbReference>
<dbReference type="PANTHER" id="PTHR43654">
    <property type="entry name" value="GLUTAMATE 5-KINASE"/>
    <property type="match status" value="1"/>
</dbReference>
<dbReference type="PANTHER" id="PTHR43654:SF1">
    <property type="entry name" value="ISOPENTENYL PHOSPHATE KINASE"/>
    <property type="match status" value="1"/>
</dbReference>
<dbReference type="Pfam" id="PF00696">
    <property type="entry name" value="AA_kinase"/>
    <property type="match status" value="1"/>
</dbReference>
<dbReference type="Pfam" id="PF01472">
    <property type="entry name" value="PUA"/>
    <property type="match status" value="1"/>
</dbReference>
<dbReference type="PIRSF" id="PIRSF000729">
    <property type="entry name" value="GK"/>
    <property type="match status" value="1"/>
</dbReference>
<dbReference type="PRINTS" id="PR00474">
    <property type="entry name" value="GLU5KINASE"/>
</dbReference>
<dbReference type="SMART" id="SM00359">
    <property type="entry name" value="PUA"/>
    <property type="match status" value="1"/>
</dbReference>
<dbReference type="SUPFAM" id="SSF53633">
    <property type="entry name" value="Carbamate kinase-like"/>
    <property type="match status" value="1"/>
</dbReference>
<dbReference type="SUPFAM" id="SSF88697">
    <property type="entry name" value="PUA domain-like"/>
    <property type="match status" value="1"/>
</dbReference>
<dbReference type="PROSITE" id="PS00902">
    <property type="entry name" value="GLUTAMATE_5_KINASE"/>
    <property type="match status" value="1"/>
</dbReference>
<dbReference type="PROSITE" id="PS50890">
    <property type="entry name" value="PUA"/>
    <property type="match status" value="1"/>
</dbReference>
<sequence length="372" mass="40297">MREILKNVRRLVVKIGSSSLTHPETGKINLAAMERFVRECADLKNAGFEVIIVSSGAIAAGMGRLALPEKPKNLPEKQACAAVGQGVLMHLYEKFFSEYQVIAAQVLLTGEDLAVRKRFLNAKHTFSALLNYGVVPVVNENDTVAVEEIRFGDNDTLSARVAVLVEADLLVLLSDIDGLYTADPRKNSNARFLPEVLEINEEIEQLAGGSGTAVGTGGMETKIEAAKIAVNAGIPMVIARADYGNLRRILRGEEVGTFFYPKKKKQWKKQWLLSGARVQGSIIVDLGAEEALCSGGKSLLPSGVLGVEGEFPTGAIVAVKNLKGRVIAKGLTNYAAQDILKIKGLHSWEIADVLGHKDYDEIIHRDNLVLVD</sequence>